<evidence type="ECO:0000250" key="1">
    <source>
        <dbReference type="UniProtKB" id="A1L3X0"/>
    </source>
</evidence>
<evidence type="ECO:0000255" key="2">
    <source>
        <dbReference type="HAMAP-Rule" id="MF_03207"/>
    </source>
</evidence>
<evidence type="ECO:0000305" key="3"/>
<comment type="function">
    <text evidence="2">Catalyzes the first and rate-limiting reaction of the four reactions that constitute the long-chain fatty acids elongation cycle. This endoplasmic reticulum-bound enzymatic process allows the addition of 2 carbons to the chain of long- and very long-chain fatty acids (VLCFAs) per cycle. Condensing enzyme with higher activity toward C18 acyl-CoAs, especially C18:3(n-3) acyl-CoAs and C18:3(n-6)-CoAs. Also active toward C20:4-, C18:0-, C18:1-, C18:2- and C16:0-CoAs, and weakly toward C20:0-CoA. Little or no activity toward C22:0-, C24:0-, or C26:0-CoAs. May participate in the production of saturated and polyunsaturated VLCFAs of different chain lengths that are involved in multiple biological processes as precursors of membrane lipids and lipid mediators.</text>
</comment>
<comment type="catalytic activity">
    <reaction evidence="2">
        <text>a very-long-chain acyl-CoA + malonyl-CoA + H(+) = a very-long-chain 3-oxoacyl-CoA + CO2 + CoA</text>
        <dbReference type="Rhea" id="RHEA:32727"/>
        <dbReference type="ChEBI" id="CHEBI:15378"/>
        <dbReference type="ChEBI" id="CHEBI:16526"/>
        <dbReference type="ChEBI" id="CHEBI:57287"/>
        <dbReference type="ChEBI" id="CHEBI:57384"/>
        <dbReference type="ChEBI" id="CHEBI:90725"/>
        <dbReference type="ChEBI" id="CHEBI:90736"/>
        <dbReference type="EC" id="2.3.1.199"/>
    </reaction>
    <physiologicalReaction direction="left-to-right" evidence="1">
        <dbReference type="Rhea" id="RHEA:32728"/>
    </physiologicalReaction>
</comment>
<comment type="catalytic activity">
    <reaction evidence="1">
        <text>eicosanoyl-CoA + malonyl-CoA + H(+) = 3-oxodocosanoyl-CoA + CO2 + CoA</text>
        <dbReference type="Rhea" id="RHEA:35327"/>
        <dbReference type="ChEBI" id="CHEBI:15378"/>
        <dbReference type="ChEBI" id="CHEBI:16526"/>
        <dbReference type="ChEBI" id="CHEBI:57287"/>
        <dbReference type="ChEBI" id="CHEBI:57380"/>
        <dbReference type="ChEBI" id="CHEBI:57384"/>
        <dbReference type="ChEBI" id="CHEBI:71451"/>
    </reaction>
    <physiologicalReaction direction="left-to-right" evidence="1">
        <dbReference type="Rhea" id="RHEA:35328"/>
    </physiologicalReaction>
</comment>
<comment type="catalytic activity">
    <reaction evidence="1">
        <text>(5Z,8Z,11Z,14Z)-eicosatetraenoyl-CoA + malonyl-CoA + H(+) = (7Z,10Z,13Z,16Z)-3-oxodocosatetraenoyl-CoA + CO2 + CoA</text>
        <dbReference type="Rhea" id="RHEA:36475"/>
        <dbReference type="ChEBI" id="CHEBI:15378"/>
        <dbReference type="ChEBI" id="CHEBI:16526"/>
        <dbReference type="ChEBI" id="CHEBI:57287"/>
        <dbReference type="ChEBI" id="CHEBI:57368"/>
        <dbReference type="ChEBI" id="CHEBI:57384"/>
        <dbReference type="ChEBI" id="CHEBI:73852"/>
    </reaction>
    <physiologicalReaction direction="left-to-right" evidence="1">
        <dbReference type="Rhea" id="RHEA:36476"/>
    </physiologicalReaction>
</comment>
<comment type="catalytic activity">
    <reaction evidence="1">
        <text>(6Z,9Z,12Z)-octadecatrienoyl-CoA + malonyl-CoA + H(+) = (8Z,11Z,14Z)-3-oxoeicosatrienoyl-CoA + CO2 + CoA</text>
        <dbReference type="Rhea" id="RHEA:35379"/>
        <dbReference type="ChEBI" id="CHEBI:15378"/>
        <dbReference type="ChEBI" id="CHEBI:16526"/>
        <dbReference type="ChEBI" id="CHEBI:57287"/>
        <dbReference type="ChEBI" id="CHEBI:57363"/>
        <dbReference type="ChEBI" id="CHEBI:57384"/>
        <dbReference type="ChEBI" id="CHEBI:71481"/>
    </reaction>
    <physiologicalReaction direction="left-to-right" evidence="1">
        <dbReference type="Rhea" id="RHEA:35380"/>
    </physiologicalReaction>
</comment>
<comment type="catalytic activity">
    <reaction evidence="1">
        <text>(9Z,12Z)-octadecadienoyl-CoA + malonyl-CoA + H(+) = (11Z,14Z)-3-oxoicosa-11,14-dienoyl-CoA + CO2 + CoA</text>
        <dbReference type="Rhea" id="RHEA:36503"/>
        <dbReference type="ChEBI" id="CHEBI:15378"/>
        <dbReference type="ChEBI" id="CHEBI:16526"/>
        <dbReference type="ChEBI" id="CHEBI:57287"/>
        <dbReference type="ChEBI" id="CHEBI:57383"/>
        <dbReference type="ChEBI" id="CHEBI:57384"/>
        <dbReference type="ChEBI" id="CHEBI:74012"/>
    </reaction>
    <physiologicalReaction direction="left-to-right" evidence="1">
        <dbReference type="Rhea" id="RHEA:36504"/>
    </physiologicalReaction>
</comment>
<comment type="catalytic activity">
    <reaction evidence="1">
        <text>(9Z)-octadecenoyl-CoA + malonyl-CoA + H(+) = 3-oxo-(11Z)-eicosenoyl-CoA + CO2 + CoA</text>
        <dbReference type="Rhea" id="RHEA:36511"/>
        <dbReference type="ChEBI" id="CHEBI:15378"/>
        <dbReference type="ChEBI" id="CHEBI:16526"/>
        <dbReference type="ChEBI" id="CHEBI:57287"/>
        <dbReference type="ChEBI" id="CHEBI:57384"/>
        <dbReference type="ChEBI" id="CHEBI:57387"/>
        <dbReference type="ChEBI" id="CHEBI:74011"/>
    </reaction>
    <physiologicalReaction direction="left-to-right" evidence="1">
        <dbReference type="Rhea" id="RHEA:36512"/>
    </physiologicalReaction>
</comment>
<comment type="catalytic activity">
    <reaction evidence="1">
        <text>octadecanoyl-CoA + malonyl-CoA + H(+) = 3-oxoeicosanoyl-CoA + CO2 + CoA</text>
        <dbReference type="Rhea" id="RHEA:35319"/>
        <dbReference type="ChEBI" id="CHEBI:15378"/>
        <dbReference type="ChEBI" id="CHEBI:16526"/>
        <dbReference type="ChEBI" id="CHEBI:57287"/>
        <dbReference type="ChEBI" id="CHEBI:57384"/>
        <dbReference type="ChEBI" id="CHEBI:57394"/>
        <dbReference type="ChEBI" id="CHEBI:65115"/>
    </reaction>
    <physiologicalReaction direction="left-to-right" evidence="1">
        <dbReference type="Rhea" id="RHEA:35320"/>
    </physiologicalReaction>
</comment>
<comment type="catalytic activity">
    <reaction evidence="1">
        <text>hexadecanoyl-CoA + malonyl-CoA + H(+) = 3-oxooctadecanoyl-CoA + CO2 + CoA</text>
        <dbReference type="Rhea" id="RHEA:35315"/>
        <dbReference type="ChEBI" id="CHEBI:15378"/>
        <dbReference type="ChEBI" id="CHEBI:16526"/>
        <dbReference type="ChEBI" id="CHEBI:57287"/>
        <dbReference type="ChEBI" id="CHEBI:57379"/>
        <dbReference type="ChEBI" id="CHEBI:57384"/>
        <dbReference type="ChEBI" id="CHEBI:71407"/>
    </reaction>
    <physiologicalReaction direction="left-to-right" evidence="1">
        <dbReference type="Rhea" id="RHEA:35316"/>
    </physiologicalReaction>
</comment>
<comment type="catalytic activity">
    <reaction evidence="1">
        <text>(9Z,12Z,15Z)-octadecatrienoyl-CoA + malonyl-CoA + H(+) = (11Z,14Z,17Z)-3-oxoeicosatrienoyl-CoA + CO2 + CoA</text>
        <dbReference type="Rhea" id="RHEA:36523"/>
        <dbReference type="ChEBI" id="CHEBI:15378"/>
        <dbReference type="ChEBI" id="CHEBI:16526"/>
        <dbReference type="ChEBI" id="CHEBI:57287"/>
        <dbReference type="ChEBI" id="CHEBI:57384"/>
        <dbReference type="ChEBI" id="CHEBI:74034"/>
        <dbReference type="ChEBI" id="CHEBI:74054"/>
    </reaction>
    <physiologicalReaction direction="left-to-right" evidence="1">
        <dbReference type="Rhea" id="RHEA:36524"/>
    </physiologicalReaction>
</comment>
<comment type="pathway">
    <text evidence="2">Lipid metabolism; fatty acid biosynthesis.</text>
</comment>
<comment type="subunit">
    <text evidence="1">Homodimer (By similarity). Interacts with TECR (By similarity).</text>
</comment>
<comment type="subcellular location">
    <subcellularLocation>
        <location evidence="2">Endoplasmic reticulum membrane</location>
        <topology evidence="2">Multi-pass membrane protein</topology>
    </subcellularLocation>
</comment>
<comment type="domain">
    <text evidence="2">The C-terminal di-lysine motif may confer endoplasmic reticulum localization.</text>
</comment>
<comment type="similarity">
    <text evidence="2">Belongs to the ELO family. ELOVL7 subfamily.</text>
</comment>
<keyword id="KW-0007">Acetylation</keyword>
<keyword id="KW-1015">Disulfide bond</keyword>
<keyword id="KW-0256">Endoplasmic reticulum</keyword>
<keyword id="KW-0275">Fatty acid biosynthesis</keyword>
<keyword id="KW-0276">Fatty acid metabolism</keyword>
<keyword id="KW-0444">Lipid biosynthesis</keyword>
<keyword id="KW-0443">Lipid metabolism</keyword>
<keyword id="KW-0472">Membrane</keyword>
<keyword id="KW-1185">Reference proteome</keyword>
<keyword id="KW-0808">Transferase</keyword>
<keyword id="KW-0812">Transmembrane</keyword>
<keyword id="KW-1133">Transmembrane helix</keyword>
<proteinExistence type="evidence at transcript level"/>
<sequence>MAFSDLTSRTVRFYDNWIKDADPRVEDYLLMSSPLPQTIILGLYVYFVTSLGPKLMENRKPFELKKAMITYNFFIVLFSVYMCYEFVMSGWGTGYSFRCDIVDYSQSPRAMRMVHTCWLYYFSKFIELLDTIFFVLRKKNSQVTFLHVFHHTIMPWTWWFGVKFAAGGLGTFHAFLNTAVHVVMYSYYGLCAMGPAYQKYLWWKKHLTSLQLVQFVLVTIHIGQIFFMEDCNYQYPVFLYIIMSYGCIFLLLFLHFWYRAYTKGQRLPKTLENGNCKSKRH</sequence>
<name>ELOV7_MOUSE</name>
<accession>Q9D2Y9</accession>
<accession>Q8BX38</accession>
<accession>Q8BYY8</accession>
<dbReference type="EC" id="2.3.1.199" evidence="1 2"/>
<dbReference type="EMBL" id="AK018616">
    <property type="protein sequence ID" value="BAB31310.1"/>
    <property type="molecule type" value="mRNA"/>
</dbReference>
<dbReference type="EMBL" id="AK037162">
    <property type="protein sequence ID" value="BAC29727.1"/>
    <property type="molecule type" value="mRNA"/>
</dbReference>
<dbReference type="EMBL" id="AK049118">
    <property type="protein sequence ID" value="BAC33552.1"/>
    <property type="molecule type" value="mRNA"/>
</dbReference>
<dbReference type="EMBL" id="AK137668">
    <property type="protein sequence ID" value="BAE23454.1"/>
    <property type="molecule type" value="mRNA"/>
</dbReference>
<dbReference type="EMBL" id="BC005602">
    <property type="protein sequence ID" value="AAH05602.1"/>
    <property type="molecule type" value="mRNA"/>
</dbReference>
<dbReference type="CCDS" id="CCDS36779.1"/>
<dbReference type="RefSeq" id="NP_083277.3">
    <property type="nucleotide sequence ID" value="NM_029001.5"/>
</dbReference>
<dbReference type="SMR" id="Q9D2Y9"/>
<dbReference type="FunCoup" id="Q9D2Y9">
    <property type="interactions" value="846"/>
</dbReference>
<dbReference type="STRING" id="10090.ENSMUSP00000022207"/>
<dbReference type="PhosphoSitePlus" id="Q9D2Y9"/>
<dbReference type="PaxDb" id="10090-ENSMUSP00000022207"/>
<dbReference type="ProteomicsDB" id="275745"/>
<dbReference type="Antibodypedia" id="23642">
    <property type="antibodies" value="147 antibodies from 24 providers"/>
</dbReference>
<dbReference type="DNASU" id="74559"/>
<dbReference type="Ensembl" id="ENSMUST00000022207.10">
    <property type="protein sequence ID" value="ENSMUSP00000022207.9"/>
    <property type="gene ID" value="ENSMUSG00000021696.10"/>
</dbReference>
<dbReference type="GeneID" id="74559"/>
<dbReference type="KEGG" id="mmu:74559"/>
<dbReference type="UCSC" id="uc007rva.2">
    <property type="organism name" value="mouse"/>
</dbReference>
<dbReference type="AGR" id="MGI:1921809"/>
<dbReference type="CTD" id="79993"/>
<dbReference type="MGI" id="MGI:1921809">
    <property type="gene designation" value="Elovl7"/>
</dbReference>
<dbReference type="VEuPathDB" id="HostDB:ENSMUSG00000021696"/>
<dbReference type="eggNOG" id="KOG3071">
    <property type="taxonomic scope" value="Eukaryota"/>
</dbReference>
<dbReference type="GeneTree" id="ENSGT01050000244838"/>
<dbReference type="HOGENOM" id="CLU_048483_0_0_1"/>
<dbReference type="InParanoid" id="Q9D2Y9"/>
<dbReference type="OMA" id="EFMQNAD"/>
<dbReference type="OrthoDB" id="434092at2759"/>
<dbReference type="PhylomeDB" id="Q9D2Y9"/>
<dbReference type="TreeFam" id="TF323454"/>
<dbReference type="Reactome" id="R-MMU-75876">
    <property type="pathway name" value="Synthesis of very long-chain fatty acyl-CoAs"/>
</dbReference>
<dbReference type="UniPathway" id="UPA00094"/>
<dbReference type="BioGRID-ORCS" id="74559">
    <property type="hits" value="4 hits in 78 CRISPR screens"/>
</dbReference>
<dbReference type="PRO" id="PR:Q9D2Y9"/>
<dbReference type="Proteomes" id="UP000000589">
    <property type="component" value="Chromosome 13"/>
</dbReference>
<dbReference type="RNAct" id="Q9D2Y9">
    <property type="molecule type" value="protein"/>
</dbReference>
<dbReference type="Bgee" id="ENSMUSG00000021696">
    <property type="expression patterns" value="Expressed in tail skin and 214 other cell types or tissues"/>
</dbReference>
<dbReference type="ExpressionAtlas" id="Q9D2Y9">
    <property type="expression patterns" value="baseline and differential"/>
</dbReference>
<dbReference type="GO" id="GO:0005783">
    <property type="term" value="C:endoplasmic reticulum"/>
    <property type="evidence" value="ECO:0000250"/>
    <property type="project" value="UniProtKB"/>
</dbReference>
<dbReference type="GO" id="GO:0005789">
    <property type="term" value="C:endoplasmic reticulum membrane"/>
    <property type="evidence" value="ECO:0007669"/>
    <property type="project" value="UniProtKB-SubCell"/>
</dbReference>
<dbReference type="GO" id="GO:0009922">
    <property type="term" value="F:fatty acid elongase activity"/>
    <property type="evidence" value="ECO:0007669"/>
    <property type="project" value="UniProtKB-UniRule"/>
</dbReference>
<dbReference type="GO" id="GO:0034625">
    <property type="term" value="P:fatty acid elongation, monounsaturated fatty acid"/>
    <property type="evidence" value="ECO:0007669"/>
    <property type="project" value="UniProtKB-UniRule"/>
</dbReference>
<dbReference type="GO" id="GO:0034626">
    <property type="term" value="P:fatty acid elongation, polyunsaturated fatty acid"/>
    <property type="evidence" value="ECO:0007669"/>
    <property type="project" value="UniProtKB-UniRule"/>
</dbReference>
<dbReference type="GO" id="GO:0019367">
    <property type="term" value="P:fatty acid elongation, saturated fatty acid"/>
    <property type="evidence" value="ECO:0000250"/>
    <property type="project" value="UniProtKB"/>
</dbReference>
<dbReference type="GO" id="GO:0035338">
    <property type="term" value="P:long-chain fatty-acyl-CoA biosynthetic process"/>
    <property type="evidence" value="ECO:0007669"/>
    <property type="project" value="UniProtKB-UniRule"/>
</dbReference>
<dbReference type="GO" id="GO:0006636">
    <property type="term" value="P:unsaturated fatty acid biosynthetic process"/>
    <property type="evidence" value="ECO:0007669"/>
    <property type="project" value="UniProtKB-UniRule"/>
</dbReference>
<dbReference type="GO" id="GO:0042761">
    <property type="term" value="P:very long-chain fatty acid biosynthetic process"/>
    <property type="evidence" value="ECO:0000250"/>
    <property type="project" value="UniProtKB"/>
</dbReference>
<dbReference type="HAMAP" id="MF_03207">
    <property type="entry name" value="VLCF_elongase_7"/>
    <property type="match status" value="1"/>
</dbReference>
<dbReference type="InterPro" id="IPR030457">
    <property type="entry name" value="ELO_CS"/>
</dbReference>
<dbReference type="InterPro" id="IPR002076">
    <property type="entry name" value="ELO_fam"/>
</dbReference>
<dbReference type="InterPro" id="IPR033670">
    <property type="entry name" value="ELOVL7"/>
</dbReference>
<dbReference type="PANTHER" id="PTHR11157:SF118">
    <property type="entry name" value="ELONGATION OF VERY LONG CHAIN FATTY ACIDS PROTEIN 7"/>
    <property type="match status" value="1"/>
</dbReference>
<dbReference type="PANTHER" id="PTHR11157">
    <property type="entry name" value="FATTY ACID ACYL TRANSFERASE-RELATED"/>
    <property type="match status" value="1"/>
</dbReference>
<dbReference type="Pfam" id="PF01151">
    <property type="entry name" value="ELO"/>
    <property type="match status" value="1"/>
</dbReference>
<dbReference type="PROSITE" id="PS01188">
    <property type="entry name" value="ELO"/>
    <property type="match status" value="1"/>
</dbReference>
<protein>
    <recommendedName>
        <fullName evidence="2">Very long chain fatty acid elongase 7</fullName>
        <ecNumber evidence="1 2">2.3.1.199</ecNumber>
    </recommendedName>
    <alternativeName>
        <fullName evidence="2">3-keto acyl-CoA synthase Elovl7</fullName>
    </alternativeName>
    <alternativeName>
        <fullName evidence="2">ELOVL fatty acid elongase 7</fullName>
        <shortName evidence="2">ELOVL FA elongase 7</shortName>
    </alternativeName>
    <alternativeName>
        <fullName evidence="2">Elongation of very long chain fatty acids protein 7</fullName>
    </alternativeName>
    <alternativeName>
        <fullName evidence="2">Very long chain 3-ketoacyl-CoA synthase 7</fullName>
    </alternativeName>
    <alternativeName>
        <fullName evidence="2">Very long chain 3-oxoacyl-CoA synthase 7</fullName>
    </alternativeName>
</protein>
<gene>
    <name evidence="2" type="primary">Elovl7</name>
</gene>
<feature type="initiator methionine" description="Removed" evidence="1">
    <location>
        <position position="1"/>
    </location>
</feature>
<feature type="chain" id="PRO_0000311989" description="Very long chain fatty acid elongase 7">
    <location>
        <begin position="2"/>
        <end position="281"/>
    </location>
</feature>
<feature type="topological domain" description="Lumenal" evidence="1">
    <location>
        <begin position="2"/>
        <end position="27"/>
    </location>
</feature>
<feature type="transmembrane region" description="Helical; Name=1" evidence="2">
    <location>
        <begin position="28"/>
        <end position="48"/>
    </location>
</feature>
<feature type="topological domain" description="Cytoplasmic" evidence="1">
    <location>
        <begin position="49"/>
        <end position="72"/>
    </location>
</feature>
<feature type="transmembrane region" description="Helical; Name=2" evidence="2">
    <location>
        <begin position="73"/>
        <end position="93"/>
    </location>
</feature>
<feature type="topological domain" description="Lumenal" evidence="1">
    <location>
        <begin position="94"/>
        <end position="115"/>
    </location>
</feature>
<feature type="transmembrane region" description="Helical; Name=3" evidence="2">
    <location>
        <begin position="116"/>
        <end position="136"/>
    </location>
</feature>
<feature type="topological domain" description="Cytoplasmic" evidence="1">
    <location>
        <begin position="137"/>
        <end position="142"/>
    </location>
</feature>
<feature type="transmembrane region" description="Helical; Name=4" evidence="2">
    <location>
        <begin position="143"/>
        <end position="162"/>
    </location>
</feature>
<feature type="topological domain" description="Lumenal" evidence="1">
    <location>
        <begin position="163"/>
        <end position="171"/>
    </location>
</feature>
<feature type="transmembrane region" description="Helical; Name=5" evidence="2">
    <location>
        <begin position="172"/>
        <end position="194"/>
    </location>
</feature>
<feature type="topological domain" description="Cytoplasmic" evidence="1">
    <location>
        <begin position="195"/>
        <end position="206"/>
    </location>
</feature>
<feature type="transmembrane region" description="Helical; Name=6" evidence="2">
    <location>
        <begin position="207"/>
        <end position="227"/>
    </location>
</feature>
<feature type="topological domain" description="Lumenal" evidence="1">
    <location>
        <begin position="228"/>
        <end position="236"/>
    </location>
</feature>
<feature type="transmembrane region" description="Helical; Name=7" evidence="2">
    <location>
        <begin position="237"/>
        <end position="257"/>
    </location>
</feature>
<feature type="topological domain" description="Cytoplasmic" evidence="1">
    <location>
        <begin position="258"/>
        <end position="281"/>
    </location>
</feature>
<feature type="short sequence motif" description="HxxHH motif" evidence="1">
    <location>
        <begin position="147"/>
        <end position="151"/>
    </location>
</feature>
<feature type="short sequence motif" description="Di-lysine motif" evidence="2">
    <location>
        <begin position="277"/>
        <end position="281"/>
    </location>
</feature>
<feature type="active site" description="Nucleophile" evidence="1">
    <location>
        <position position="150"/>
    </location>
</feature>
<feature type="binding site" evidence="1">
    <location>
        <position position="124"/>
    </location>
    <ligand>
        <name>3-oxoeicosanoyl-CoA</name>
        <dbReference type="ChEBI" id="CHEBI:65115"/>
    </ligand>
</feature>
<feature type="binding site" evidence="1">
    <location>
        <position position="137"/>
    </location>
    <ligand>
        <name>3-oxoeicosanoyl-CoA</name>
        <dbReference type="ChEBI" id="CHEBI:65115"/>
    </ligand>
</feature>
<feature type="binding site" evidence="1">
    <location>
        <position position="139"/>
    </location>
    <ligand>
        <name>3-oxoeicosanoyl-CoA</name>
        <dbReference type="ChEBI" id="CHEBI:65115"/>
    </ligand>
</feature>
<feature type="binding site" evidence="1">
    <location>
        <position position="142"/>
    </location>
    <ligand>
        <name>3-oxoeicosanoyl-CoA</name>
        <dbReference type="ChEBI" id="CHEBI:65115"/>
    </ligand>
</feature>
<feature type="binding site" evidence="1">
    <location>
        <position position="147"/>
    </location>
    <ligand>
        <name>3-oxoeicosanoyl-CoA</name>
        <dbReference type="ChEBI" id="CHEBI:65115"/>
    </ligand>
</feature>
<feature type="binding site" evidence="1">
    <location>
        <position position="187"/>
    </location>
    <ligand>
        <name>3-oxoeicosanoyl-CoA</name>
        <dbReference type="ChEBI" id="CHEBI:65115"/>
    </ligand>
</feature>
<feature type="binding site" evidence="1">
    <location>
        <position position="204"/>
    </location>
    <ligand>
        <name>3-oxoeicosanoyl-CoA</name>
        <dbReference type="ChEBI" id="CHEBI:65115"/>
    </ligand>
</feature>
<feature type="binding site" evidence="1">
    <location>
        <position position="208"/>
    </location>
    <ligand>
        <name>3-oxoeicosanoyl-CoA</name>
        <dbReference type="ChEBI" id="CHEBI:65115"/>
    </ligand>
</feature>
<feature type="binding site" evidence="1">
    <location>
        <position position="211"/>
    </location>
    <ligand>
        <name>3-oxoeicosanoyl-CoA</name>
        <dbReference type="ChEBI" id="CHEBI:65115"/>
    </ligand>
</feature>
<feature type="binding site" evidence="1">
    <location>
        <position position="266"/>
    </location>
    <ligand>
        <name>3-oxoeicosanoyl-CoA</name>
        <dbReference type="ChEBI" id="CHEBI:65115"/>
    </ligand>
</feature>
<feature type="modified residue" description="N-acetylalanine" evidence="1">
    <location>
        <position position="2"/>
    </location>
</feature>
<feature type="disulfide bond" evidence="1">
    <location>
        <begin position="99"/>
        <end position="231"/>
    </location>
</feature>
<feature type="sequence conflict" description="In Ref. 1; BAC29727." evidence="3" ref="1">
    <original>V</original>
    <variation>F</variation>
    <location>
        <position position="25"/>
    </location>
</feature>
<feature type="sequence conflict" description="In Ref. 1; BAC33552." evidence="3" ref="1">
    <original>F</original>
    <variation>S</variation>
    <location>
        <position position="249"/>
    </location>
</feature>
<reference key="1">
    <citation type="journal article" date="2005" name="Science">
        <title>The transcriptional landscape of the mammalian genome.</title>
        <authorList>
            <person name="Carninci P."/>
            <person name="Kasukawa T."/>
            <person name="Katayama S."/>
            <person name="Gough J."/>
            <person name="Frith M.C."/>
            <person name="Maeda N."/>
            <person name="Oyama R."/>
            <person name="Ravasi T."/>
            <person name="Lenhard B."/>
            <person name="Wells C."/>
            <person name="Kodzius R."/>
            <person name="Shimokawa K."/>
            <person name="Bajic V.B."/>
            <person name="Brenner S.E."/>
            <person name="Batalov S."/>
            <person name="Forrest A.R."/>
            <person name="Zavolan M."/>
            <person name="Davis M.J."/>
            <person name="Wilming L.G."/>
            <person name="Aidinis V."/>
            <person name="Allen J.E."/>
            <person name="Ambesi-Impiombato A."/>
            <person name="Apweiler R."/>
            <person name="Aturaliya R.N."/>
            <person name="Bailey T.L."/>
            <person name="Bansal M."/>
            <person name="Baxter L."/>
            <person name="Beisel K.W."/>
            <person name="Bersano T."/>
            <person name="Bono H."/>
            <person name="Chalk A.M."/>
            <person name="Chiu K.P."/>
            <person name="Choudhary V."/>
            <person name="Christoffels A."/>
            <person name="Clutterbuck D.R."/>
            <person name="Crowe M.L."/>
            <person name="Dalla E."/>
            <person name="Dalrymple B.P."/>
            <person name="de Bono B."/>
            <person name="Della Gatta G."/>
            <person name="di Bernardo D."/>
            <person name="Down T."/>
            <person name="Engstrom P."/>
            <person name="Fagiolini M."/>
            <person name="Faulkner G."/>
            <person name="Fletcher C.F."/>
            <person name="Fukushima T."/>
            <person name="Furuno M."/>
            <person name="Futaki S."/>
            <person name="Gariboldi M."/>
            <person name="Georgii-Hemming P."/>
            <person name="Gingeras T.R."/>
            <person name="Gojobori T."/>
            <person name="Green R.E."/>
            <person name="Gustincich S."/>
            <person name="Harbers M."/>
            <person name="Hayashi Y."/>
            <person name="Hensch T.K."/>
            <person name="Hirokawa N."/>
            <person name="Hill D."/>
            <person name="Huminiecki L."/>
            <person name="Iacono M."/>
            <person name="Ikeo K."/>
            <person name="Iwama A."/>
            <person name="Ishikawa T."/>
            <person name="Jakt M."/>
            <person name="Kanapin A."/>
            <person name="Katoh M."/>
            <person name="Kawasawa Y."/>
            <person name="Kelso J."/>
            <person name="Kitamura H."/>
            <person name="Kitano H."/>
            <person name="Kollias G."/>
            <person name="Krishnan S.P."/>
            <person name="Kruger A."/>
            <person name="Kummerfeld S.K."/>
            <person name="Kurochkin I.V."/>
            <person name="Lareau L.F."/>
            <person name="Lazarevic D."/>
            <person name="Lipovich L."/>
            <person name="Liu J."/>
            <person name="Liuni S."/>
            <person name="McWilliam S."/>
            <person name="Madan Babu M."/>
            <person name="Madera M."/>
            <person name="Marchionni L."/>
            <person name="Matsuda H."/>
            <person name="Matsuzawa S."/>
            <person name="Miki H."/>
            <person name="Mignone F."/>
            <person name="Miyake S."/>
            <person name="Morris K."/>
            <person name="Mottagui-Tabar S."/>
            <person name="Mulder N."/>
            <person name="Nakano N."/>
            <person name="Nakauchi H."/>
            <person name="Ng P."/>
            <person name="Nilsson R."/>
            <person name="Nishiguchi S."/>
            <person name="Nishikawa S."/>
            <person name="Nori F."/>
            <person name="Ohara O."/>
            <person name="Okazaki Y."/>
            <person name="Orlando V."/>
            <person name="Pang K.C."/>
            <person name="Pavan W.J."/>
            <person name="Pavesi G."/>
            <person name="Pesole G."/>
            <person name="Petrovsky N."/>
            <person name="Piazza S."/>
            <person name="Reed J."/>
            <person name="Reid J.F."/>
            <person name="Ring B.Z."/>
            <person name="Ringwald M."/>
            <person name="Rost B."/>
            <person name="Ruan Y."/>
            <person name="Salzberg S.L."/>
            <person name="Sandelin A."/>
            <person name="Schneider C."/>
            <person name="Schoenbach C."/>
            <person name="Sekiguchi K."/>
            <person name="Semple C.A."/>
            <person name="Seno S."/>
            <person name="Sessa L."/>
            <person name="Sheng Y."/>
            <person name="Shibata Y."/>
            <person name="Shimada H."/>
            <person name="Shimada K."/>
            <person name="Silva D."/>
            <person name="Sinclair B."/>
            <person name="Sperling S."/>
            <person name="Stupka E."/>
            <person name="Sugiura K."/>
            <person name="Sultana R."/>
            <person name="Takenaka Y."/>
            <person name="Taki K."/>
            <person name="Tammoja K."/>
            <person name="Tan S.L."/>
            <person name="Tang S."/>
            <person name="Taylor M.S."/>
            <person name="Tegner J."/>
            <person name="Teichmann S.A."/>
            <person name="Ueda H.R."/>
            <person name="van Nimwegen E."/>
            <person name="Verardo R."/>
            <person name="Wei C.L."/>
            <person name="Yagi K."/>
            <person name="Yamanishi H."/>
            <person name="Zabarovsky E."/>
            <person name="Zhu S."/>
            <person name="Zimmer A."/>
            <person name="Hide W."/>
            <person name="Bult C."/>
            <person name="Grimmond S.M."/>
            <person name="Teasdale R.D."/>
            <person name="Liu E.T."/>
            <person name="Brusic V."/>
            <person name="Quackenbush J."/>
            <person name="Wahlestedt C."/>
            <person name="Mattick J.S."/>
            <person name="Hume D.A."/>
            <person name="Kai C."/>
            <person name="Sasaki D."/>
            <person name="Tomaru Y."/>
            <person name="Fukuda S."/>
            <person name="Kanamori-Katayama M."/>
            <person name="Suzuki M."/>
            <person name="Aoki J."/>
            <person name="Arakawa T."/>
            <person name="Iida J."/>
            <person name="Imamura K."/>
            <person name="Itoh M."/>
            <person name="Kato T."/>
            <person name="Kawaji H."/>
            <person name="Kawagashira N."/>
            <person name="Kawashima T."/>
            <person name="Kojima M."/>
            <person name="Kondo S."/>
            <person name="Konno H."/>
            <person name="Nakano K."/>
            <person name="Ninomiya N."/>
            <person name="Nishio T."/>
            <person name="Okada M."/>
            <person name="Plessy C."/>
            <person name="Shibata K."/>
            <person name="Shiraki T."/>
            <person name="Suzuki S."/>
            <person name="Tagami M."/>
            <person name="Waki K."/>
            <person name="Watahiki A."/>
            <person name="Okamura-Oho Y."/>
            <person name="Suzuki H."/>
            <person name="Kawai J."/>
            <person name="Hayashizaki Y."/>
        </authorList>
    </citation>
    <scope>NUCLEOTIDE SEQUENCE [LARGE SCALE MRNA]</scope>
    <source>
        <strain>C57BL/6J</strain>
        <tissue>Cecum</tissue>
        <tissue>Skin</tissue>
        <tissue>Vagina</tissue>
    </source>
</reference>
<reference key="2">
    <citation type="journal article" date="2004" name="Genome Res.">
        <title>The status, quality, and expansion of the NIH full-length cDNA project: the Mammalian Gene Collection (MGC).</title>
        <authorList>
            <consortium name="The MGC Project Team"/>
        </authorList>
    </citation>
    <scope>NUCLEOTIDE SEQUENCE [LARGE SCALE MRNA]</scope>
    <source>
        <strain>FVB/N</strain>
        <tissue>Mammary tumor</tissue>
    </source>
</reference>
<organism>
    <name type="scientific">Mus musculus</name>
    <name type="common">Mouse</name>
    <dbReference type="NCBI Taxonomy" id="10090"/>
    <lineage>
        <taxon>Eukaryota</taxon>
        <taxon>Metazoa</taxon>
        <taxon>Chordata</taxon>
        <taxon>Craniata</taxon>
        <taxon>Vertebrata</taxon>
        <taxon>Euteleostomi</taxon>
        <taxon>Mammalia</taxon>
        <taxon>Eutheria</taxon>
        <taxon>Euarchontoglires</taxon>
        <taxon>Glires</taxon>
        <taxon>Rodentia</taxon>
        <taxon>Myomorpha</taxon>
        <taxon>Muroidea</taxon>
        <taxon>Muridae</taxon>
        <taxon>Murinae</taxon>
        <taxon>Mus</taxon>
        <taxon>Mus</taxon>
    </lineage>
</organism>